<dbReference type="EC" id="4.2.1.33" evidence="1"/>
<dbReference type="EMBL" id="AP009240">
    <property type="protein sequence ID" value="BAG75595.1"/>
    <property type="molecule type" value="Genomic_DNA"/>
</dbReference>
<dbReference type="RefSeq" id="WP_000818228.1">
    <property type="nucleotide sequence ID" value="NC_011415.1"/>
</dbReference>
<dbReference type="SMR" id="B6HZ51"/>
<dbReference type="GeneID" id="93777364"/>
<dbReference type="KEGG" id="ecy:ECSE_0071"/>
<dbReference type="HOGENOM" id="CLU_081378_0_3_6"/>
<dbReference type="UniPathway" id="UPA00048">
    <property type="reaction ID" value="UER00071"/>
</dbReference>
<dbReference type="Proteomes" id="UP000008199">
    <property type="component" value="Chromosome"/>
</dbReference>
<dbReference type="GO" id="GO:0009316">
    <property type="term" value="C:3-isopropylmalate dehydratase complex"/>
    <property type="evidence" value="ECO:0007669"/>
    <property type="project" value="InterPro"/>
</dbReference>
<dbReference type="GO" id="GO:0003861">
    <property type="term" value="F:3-isopropylmalate dehydratase activity"/>
    <property type="evidence" value="ECO:0007669"/>
    <property type="project" value="UniProtKB-UniRule"/>
</dbReference>
<dbReference type="GO" id="GO:0009098">
    <property type="term" value="P:L-leucine biosynthetic process"/>
    <property type="evidence" value="ECO:0007669"/>
    <property type="project" value="UniProtKB-UniRule"/>
</dbReference>
<dbReference type="CDD" id="cd01577">
    <property type="entry name" value="IPMI_Swivel"/>
    <property type="match status" value="1"/>
</dbReference>
<dbReference type="FunFam" id="3.20.19.10:FF:000003">
    <property type="entry name" value="3-isopropylmalate dehydratase small subunit"/>
    <property type="match status" value="1"/>
</dbReference>
<dbReference type="Gene3D" id="3.20.19.10">
    <property type="entry name" value="Aconitase, domain 4"/>
    <property type="match status" value="1"/>
</dbReference>
<dbReference type="HAMAP" id="MF_01031">
    <property type="entry name" value="LeuD_type1"/>
    <property type="match status" value="1"/>
</dbReference>
<dbReference type="InterPro" id="IPR004431">
    <property type="entry name" value="3-IsopropMal_deHydase_ssu"/>
</dbReference>
<dbReference type="InterPro" id="IPR015928">
    <property type="entry name" value="Aconitase/3IPM_dehydase_swvl"/>
</dbReference>
<dbReference type="InterPro" id="IPR000573">
    <property type="entry name" value="AconitaseA/IPMdHydase_ssu_swvl"/>
</dbReference>
<dbReference type="InterPro" id="IPR033940">
    <property type="entry name" value="IPMI_Swivel"/>
</dbReference>
<dbReference type="InterPro" id="IPR050075">
    <property type="entry name" value="LeuD"/>
</dbReference>
<dbReference type="NCBIfam" id="TIGR00171">
    <property type="entry name" value="leuD"/>
    <property type="match status" value="1"/>
</dbReference>
<dbReference type="NCBIfam" id="NF002458">
    <property type="entry name" value="PRK01641.1"/>
    <property type="match status" value="1"/>
</dbReference>
<dbReference type="PANTHER" id="PTHR43345:SF5">
    <property type="entry name" value="3-ISOPROPYLMALATE DEHYDRATASE SMALL SUBUNIT"/>
    <property type="match status" value="1"/>
</dbReference>
<dbReference type="PANTHER" id="PTHR43345">
    <property type="entry name" value="3-ISOPROPYLMALATE DEHYDRATASE SMALL SUBUNIT 2-RELATED-RELATED"/>
    <property type="match status" value="1"/>
</dbReference>
<dbReference type="Pfam" id="PF00694">
    <property type="entry name" value="Aconitase_C"/>
    <property type="match status" value="1"/>
</dbReference>
<dbReference type="SUPFAM" id="SSF52016">
    <property type="entry name" value="LeuD/IlvD-like"/>
    <property type="match status" value="1"/>
</dbReference>
<evidence type="ECO:0000255" key="1">
    <source>
        <dbReference type="HAMAP-Rule" id="MF_01031"/>
    </source>
</evidence>
<protein>
    <recommendedName>
        <fullName evidence="1">3-isopropylmalate dehydratase small subunit</fullName>
        <ecNumber evidence="1">4.2.1.33</ecNumber>
    </recommendedName>
    <alternativeName>
        <fullName evidence="1">Alpha-IPM isomerase</fullName>
        <shortName evidence="1">IPMI</shortName>
    </alternativeName>
    <alternativeName>
        <fullName evidence="1">Isopropylmalate isomerase</fullName>
    </alternativeName>
</protein>
<comment type="function">
    <text evidence="1">Catalyzes the isomerization between 2-isopropylmalate and 3-isopropylmalate, via the formation of 2-isopropylmaleate.</text>
</comment>
<comment type="catalytic activity">
    <reaction evidence="1">
        <text>(2R,3S)-3-isopropylmalate = (2S)-2-isopropylmalate</text>
        <dbReference type="Rhea" id="RHEA:32287"/>
        <dbReference type="ChEBI" id="CHEBI:1178"/>
        <dbReference type="ChEBI" id="CHEBI:35121"/>
        <dbReference type="EC" id="4.2.1.33"/>
    </reaction>
</comment>
<comment type="pathway">
    <text evidence="1">Amino-acid biosynthesis; L-leucine biosynthesis; L-leucine from 3-methyl-2-oxobutanoate: step 2/4.</text>
</comment>
<comment type="subunit">
    <text evidence="1">Heterodimer of LeuC and LeuD.</text>
</comment>
<comment type="similarity">
    <text evidence="1">Belongs to the LeuD family. LeuD type 1 subfamily.</text>
</comment>
<gene>
    <name evidence="1" type="primary">leuD</name>
    <name type="ordered locus">ECSE_0071</name>
</gene>
<feature type="chain" id="PRO_1000135805" description="3-isopropylmalate dehydratase small subunit">
    <location>
        <begin position="1"/>
        <end position="201"/>
    </location>
</feature>
<accession>B6HZ51</accession>
<proteinExistence type="inferred from homology"/>
<reference key="1">
    <citation type="journal article" date="2008" name="DNA Res.">
        <title>Complete genome sequence and comparative analysis of the wild-type commensal Escherichia coli strain SE11 isolated from a healthy adult.</title>
        <authorList>
            <person name="Oshima K."/>
            <person name="Toh H."/>
            <person name="Ogura Y."/>
            <person name="Sasamoto H."/>
            <person name="Morita H."/>
            <person name="Park S.-H."/>
            <person name="Ooka T."/>
            <person name="Iyoda S."/>
            <person name="Taylor T.D."/>
            <person name="Hayashi T."/>
            <person name="Itoh K."/>
            <person name="Hattori M."/>
        </authorList>
    </citation>
    <scope>NUCLEOTIDE SEQUENCE [LARGE SCALE GENOMIC DNA]</scope>
    <source>
        <strain>SE11</strain>
    </source>
</reference>
<sequence>MAEKFIKHTGLVVPLDAANVDTDAIIPKQFLQKVTRTGFGAHLFNDWRFLDEKGQQPNPDFVLNFPQYQGASILLARENFGCGSSREHAPWALTDYGFKVVIAPSFADIFYGNSFNNQLLPVKLSDAEVDELFALVKANPGIHFDVDLEAQEVKAGEKTYRFTIDAFRRHCMMNGLDSIGLTLQHDDAIAAYEAKQPAFMN</sequence>
<keyword id="KW-0028">Amino-acid biosynthesis</keyword>
<keyword id="KW-0100">Branched-chain amino acid biosynthesis</keyword>
<keyword id="KW-0432">Leucine biosynthesis</keyword>
<keyword id="KW-0456">Lyase</keyword>
<name>LEUD_ECOSE</name>
<organism>
    <name type="scientific">Escherichia coli (strain SE11)</name>
    <dbReference type="NCBI Taxonomy" id="409438"/>
    <lineage>
        <taxon>Bacteria</taxon>
        <taxon>Pseudomonadati</taxon>
        <taxon>Pseudomonadota</taxon>
        <taxon>Gammaproteobacteria</taxon>
        <taxon>Enterobacterales</taxon>
        <taxon>Enterobacteriaceae</taxon>
        <taxon>Escherichia</taxon>
    </lineage>
</organism>